<reference key="1">
    <citation type="submission" date="2007-07" db="EMBL/GenBank/DDBJ databases">
        <title>Complete sequence of chromosome of Shewanella baltica OS185.</title>
        <authorList>
            <consortium name="US DOE Joint Genome Institute"/>
            <person name="Copeland A."/>
            <person name="Lucas S."/>
            <person name="Lapidus A."/>
            <person name="Barry K."/>
            <person name="Glavina del Rio T."/>
            <person name="Dalin E."/>
            <person name="Tice H."/>
            <person name="Pitluck S."/>
            <person name="Sims D."/>
            <person name="Brettin T."/>
            <person name="Bruce D."/>
            <person name="Detter J.C."/>
            <person name="Han C."/>
            <person name="Schmutz J."/>
            <person name="Larimer F."/>
            <person name="Land M."/>
            <person name="Hauser L."/>
            <person name="Kyrpides N."/>
            <person name="Mikhailova N."/>
            <person name="Brettar I."/>
            <person name="Rodrigues J."/>
            <person name="Konstantinidis K."/>
            <person name="Tiedje J."/>
            <person name="Richardson P."/>
        </authorList>
    </citation>
    <scope>NUCLEOTIDE SEQUENCE [LARGE SCALE GENOMIC DNA]</scope>
    <source>
        <strain>OS185</strain>
    </source>
</reference>
<dbReference type="EMBL" id="CP000753">
    <property type="protein sequence ID" value="ABS07188.1"/>
    <property type="molecule type" value="Genomic_DNA"/>
</dbReference>
<dbReference type="RefSeq" id="WP_006080526.1">
    <property type="nucleotide sequence ID" value="NC_009665.1"/>
</dbReference>
<dbReference type="SMR" id="A6WK49"/>
<dbReference type="GeneID" id="11774616"/>
<dbReference type="KEGG" id="sbm:Shew185_1036"/>
<dbReference type="HOGENOM" id="CLU_061463_3_3_6"/>
<dbReference type="GO" id="GO:0005737">
    <property type="term" value="C:cytoplasm"/>
    <property type="evidence" value="ECO:0007669"/>
    <property type="project" value="UniProtKB-ARBA"/>
</dbReference>
<dbReference type="GO" id="GO:1990904">
    <property type="term" value="C:ribonucleoprotein complex"/>
    <property type="evidence" value="ECO:0007669"/>
    <property type="project" value="UniProtKB-KW"/>
</dbReference>
<dbReference type="GO" id="GO:0005840">
    <property type="term" value="C:ribosome"/>
    <property type="evidence" value="ECO:0007669"/>
    <property type="project" value="UniProtKB-KW"/>
</dbReference>
<dbReference type="GO" id="GO:0019843">
    <property type="term" value="F:rRNA binding"/>
    <property type="evidence" value="ECO:0007669"/>
    <property type="project" value="UniProtKB-UniRule"/>
</dbReference>
<dbReference type="GO" id="GO:0003735">
    <property type="term" value="F:structural constituent of ribosome"/>
    <property type="evidence" value="ECO:0007669"/>
    <property type="project" value="InterPro"/>
</dbReference>
<dbReference type="GO" id="GO:0006412">
    <property type="term" value="P:translation"/>
    <property type="evidence" value="ECO:0007669"/>
    <property type="project" value="UniProtKB-UniRule"/>
</dbReference>
<dbReference type="HAMAP" id="MF_01363">
    <property type="entry name" value="Ribosomal_bL21"/>
    <property type="match status" value="1"/>
</dbReference>
<dbReference type="InterPro" id="IPR028909">
    <property type="entry name" value="bL21-like"/>
</dbReference>
<dbReference type="InterPro" id="IPR036164">
    <property type="entry name" value="bL21-like_sf"/>
</dbReference>
<dbReference type="InterPro" id="IPR001787">
    <property type="entry name" value="Ribosomal_bL21"/>
</dbReference>
<dbReference type="InterPro" id="IPR018258">
    <property type="entry name" value="Ribosomal_bL21_CS"/>
</dbReference>
<dbReference type="NCBIfam" id="TIGR00061">
    <property type="entry name" value="L21"/>
    <property type="match status" value="1"/>
</dbReference>
<dbReference type="PANTHER" id="PTHR21349">
    <property type="entry name" value="50S RIBOSOMAL PROTEIN L21"/>
    <property type="match status" value="1"/>
</dbReference>
<dbReference type="PANTHER" id="PTHR21349:SF0">
    <property type="entry name" value="LARGE RIBOSOMAL SUBUNIT PROTEIN BL21M"/>
    <property type="match status" value="1"/>
</dbReference>
<dbReference type="Pfam" id="PF00829">
    <property type="entry name" value="Ribosomal_L21p"/>
    <property type="match status" value="1"/>
</dbReference>
<dbReference type="SUPFAM" id="SSF141091">
    <property type="entry name" value="L21p-like"/>
    <property type="match status" value="1"/>
</dbReference>
<dbReference type="PROSITE" id="PS01169">
    <property type="entry name" value="RIBOSOMAL_L21"/>
    <property type="match status" value="1"/>
</dbReference>
<protein>
    <recommendedName>
        <fullName evidence="1">Large ribosomal subunit protein bL21</fullName>
    </recommendedName>
    <alternativeName>
        <fullName evidence="2">50S ribosomal protein L21</fullName>
    </alternativeName>
</protein>
<name>RL21_SHEB8</name>
<comment type="function">
    <text evidence="1">This protein binds to 23S rRNA in the presence of protein L20.</text>
</comment>
<comment type="subunit">
    <text evidence="1">Part of the 50S ribosomal subunit. Contacts protein L20.</text>
</comment>
<comment type="similarity">
    <text evidence="1">Belongs to the bacterial ribosomal protein bL21 family.</text>
</comment>
<keyword id="KW-0687">Ribonucleoprotein</keyword>
<keyword id="KW-0689">Ribosomal protein</keyword>
<keyword id="KW-0694">RNA-binding</keyword>
<keyword id="KW-0699">rRNA-binding</keyword>
<gene>
    <name evidence="1" type="primary">rplU</name>
    <name type="ordered locus">Shew185_1036</name>
</gene>
<sequence length="103" mass="11410">MYAVFQSGGKQHRVAEGHTVRLEKLEVATGETIEFDQVLLIADGETVHVGAPLVAGGKVVAEVVSHGRGDKVTIVKFRRRKHHDKKMGHRQWFTEVKITAINA</sequence>
<accession>A6WK49</accession>
<organism>
    <name type="scientific">Shewanella baltica (strain OS185)</name>
    <dbReference type="NCBI Taxonomy" id="402882"/>
    <lineage>
        <taxon>Bacteria</taxon>
        <taxon>Pseudomonadati</taxon>
        <taxon>Pseudomonadota</taxon>
        <taxon>Gammaproteobacteria</taxon>
        <taxon>Alteromonadales</taxon>
        <taxon>Shewanellaceae</taxon>
        <taxon>Shewanella</taxon>
    </lineage>
</organism>
<proteinExistence type="inferred from homology"/>
<feature type="chain" id="PRO_1000067895" description="Large ribosomal subunit protein bL21">
    <location>
        <begin position="1"/>
        <end position="103"/>
    </location>
</feature>
<evidence type="ECO:0000255" key="1">
    <source>
        <dbReference type="HAMAP-Rule" id="MF_01363"/>
    </source>
</evidence>
<evidence type="ECO:0000305" key="2"/>